<accession>A5IXS0</accession>
<comment type="function">
    <text evidence="1">Catalyzes the ATP-dependent transfer of a sulfur to tRNA to produce 4-thiouridine in position 8 of tRNAs, which functions as a near-UV photosensor. Also catalyzes the transfer of sulfur to the sulfur carrier protein ThiS, forming ThiS-thiocarboxylate. This is a step in the synthesis of thiazole, in the thiamine biosynthesis pathway. The sulfur is donated as persulfide by IscS.</text>
</comment>
<comment type="catalytic activity">
    <reaction evidence="1">
        <text>[ThiI sulfur-carrier protein]-S-sulfanyl-L-cysteine + a uridine in tRNA + 2 reduced [2Fe-2S]-[ferredoxin] + ATP + H(+) = [ThiI sulfur-carrier protein]-L-cysteine + a 4-thiouridine in tRNA + 2 oxidized [2Fe-2S]-[ferredoxin] + AMP + diphosphate</text>
        <dbReference type="Rhea" id="RHEA:24176"/>
        <dbReference type="Rhea" id="RHEA-COMP:10000"/>
        <dbReference type="Rhea" id="RHEA-COMP:10001"/>
        <dbReference type="Rhea" id="RHEA-COMP:13337"/>
        <dbReference type="Rhea" id="RHEA-COMP:13338"/>
        <dbReference type="Rhea" id="RHEA-COMP:13339"/>
        <dbReference type="Rhea" id="RHEA-COMP:13340"/>
        <dbReference type="ChEBI" id="CHEBI:15378"/>
        <dbReference type="ChEBI" id="CHEBI:29950"/>
        <dbReference type="ChEBI" id="CHEBI:30616"/>
        <dbReference type="ChEBI" id="CHEBI:33019"/>
        <dbReference type="ChEBI" id="CHEBI:33737"/>
        <dbReference type="ChEBI" id="CHEBI:33738"/>
        <dbReference type="ChEBI" id="CHEBI:61963"/>
        <dbReference type="ChEBI" id="CHEBI:65315"/>
        <dbReference type="ChEBI" id="CHEBI:136798"/>
        <dbReference type="ChEBI" id="CHEBI:456215"/>
        <dbReference type="EC" id="2.8.1.4"/>
    </reaction>
</comment>
<comment type="catalytic activity">
    <reaction evidence="1">
        <text>[ThiS sulfur-carrier protein]-C-terminal Gly-Gly-AMP + S-sulfanyl-L-cysteinyl-[cysteine desulfurase] + AH2 = [ThiS sulfur-carrier protein]-C-terminal-Gly-aminoethanethioate + L-cysteinyl-[cysteine desulfurase] + A + AMP + 2 H(+)</text>
        <dbReference type="Rhea" id="RHEA:43340"/>
        <dbReference type="Rhea" id="RHEA-COMP:12157"/>
        <dbReference type="Rhea" id="RHEA-COMP:12158"/>
        <dbReference type="Rhea" id="RHEA-COMP:12910"/>
        <dbReference type="Rhea" id="RHEA-COMP:19908"/>
        <dbReference type="ChEBI" id="CHEBI:13193"/>
        <dbReference type="ChEBI" id="CHEBI:15378"/>
        <dbReference type="ChEBI" id="CHEBI:17499"/>
        <dbReference type="ChEBI" id="CHEBI:29950"/>
        <dbReference type="ChEBI" id="CHEBI:61963"/>
        <dbReference type="ChEBI" id="CHEBI:90618"/>
        <dbReference type="ChEBI" id="CHEBI:232372"/>
        <dbReference type="ChEBI" id="CHEBI:456215"/>
    </reaction>
</comment>
<comment type="pathway">
    <text evidence="1">Cofactor biosynthesis; thiamine diphosphate biosynthesis.</text>
</comment>
<comment type="subcellular location">
    <subcellularLocation>
        <location evidence="1">Cytoplasm</location>
    </subcellularLocation>
</comment>
<comment type="similarity">
    <text evidence="1">Belongs to the ThiI family.</text>
</comment>
<keyword id="KW-0067">ATP-binding</keyword>
<keyword id="KW-0963">Cytoplasm</keyword>
<keyword id="KW-0547">Nucleotide-binding</keyword>
<keyword id="KW-1185">Reference proteome</keyword>
<keyword id="KW-0694">RNA-binding</keyword>
<keyword id="KW-0784">Thiamine biosynthesis</keyword>
<keyword id="KW-0808">Transferase</keyword>
<keyword id="KW-0820">tRNA-binding</keyword>
<name>THII_MYCAP</name>
<proteinExistence type="inferred from homology"/>
<reference key="1">
    <citation type="journal article" date="2007" name="PLoS Genet.">
        <title>Being pathogenic, plastic, and sexual while living with a nearly minimal bacterial genome.</title>
        <authorList>
            <person name="Sirand-Pugnet P."/>
            <person name="Lartigue C."/>
            <person name="Marenda M."/>
            <person name="Jacob D."/>
            <person name="Barre A."/>
            <person name="Barbe V."/>
            <person name="Schenowitz C."/>
            <person name="Mangenot S."/>
            <person name="Couloux A."/>
            <person name="Segurens B."/>
            <person name="de Daruvar A."/>
            <person name="Blanchard A."/>
            <person name="Citti C."/>
        </authorList>
    </citation>
    <scope>NUCLEOTIDE SEQUENCE [LARGE SCALE GENOMIC DNA]</scope>
    <source>
        <strain>NCTC 10123 / CIP 59.7 / PG2</strain>
    </source>
</reference>
<gene>
    <name evidence="1" type="primary">thiI</name>
    <name type="ordered locus">MAG1310</name>
</gene>
<evidence type="ECO:0000255" key="1">
    <source>
        <dbReference type="HAMAP-Rule" id="MF_00021"/>
    </source>
</evidence>
<organism>
    <name type="scientific">Mycoplasmopsis agalactiae (strain NCTC 10123 / CIP 59.7 / PG2)</name>
    <name type="common">Mycoplasma agalactiae</name>
    <dbReference type="NCBI Taxonomy" id="347257"/>
    <lineage>
        <taxon>Bacteria</taxon>
        <taxon>Bacillati</taxon>
        <taxon>Mycoplasmatota</taxon>
        <taxon>Mycoplasmoidales</taxon>
        <taxon>Metamycoplasmataceae</taxon>
        <taxon>Mycoplasmopsis</taxon>
    </lineage>
</organism>
<sequence>MYEKILIRYGELTLKGKNRDSFIAQLARNIKLITGEYPETKYDRMFLTYSDANLEKLQYVFGITSYSPVIFCENNLEKITNSAIKLVNKDDKTFKISARRNNKKFELTSAEINQKVGASVLKHYPLIKVDVHNPECNINIEVRSDKTYLFSKTYEALGGLPVGISGSTLHLMSGGIDSPVAAFKLMKRGLKVSFLSFISPPQTDEKTIGKIKDLVSVLSKYQGKSHLYLANYSKLMNYISFTSNESYRINLMRRSFYRIASKFAKGKNIMTLSNGENLGQVASQTIESLSTIASASDLLILRPLIANDKVETINIAKQIKTYDISIEKAKETCELFAPKNPVTKPNLATALRLEEELTQLKDLEEELLANEIEHYTIE</sequence>
<dbReference type="EC" id="2.8.1.4" evidence="1"/>
<dbReference type="EMBL" id="CU179680">
    <property type="protein sequence ID" value="CAL58829.1"/>
    <property type="molecule type" value="Genomic_DNA"/>
</dbReference>
<dbReference type="RefSeq" id="WP_011949311.1">
    <property type="nucleotide sequence ID" value="NC_009497.1"/>
</dbReference>
<dbReference type="SMR" id="A5IXS0"/>
<dbReference type="STRING" id="347257.MAG1310"/>
<dbReference type="GeneID" id="93357897"/>
<dbReference type="KEGG" id="maa:MAG1310"/>
<dbReference type="HOGENOM" id="CLU_037952_4_0_14"/>
<dbReference type="UniPathway" id="UPA00060"/>
<dbReference type="Proteomes" id="UP000007065">
    <property type="component" value="Chromosome"/>
</dbReference>
<dbReference type="GO" id="GO:0005829">
    <property type="term" value="C:cytosol"/>
    <property type="evidence" value="ECO:0007669"/>
    <property type="project" value="TreeGrafter"/>
</dbReference>
<dbReference type="GO" id="GO:0005524">
    <property type="term" value="F:ATP binding"/>
    <property type="evidence" value="ECO:0007669"/>
    <property type="project" value="UniProtKB-UniRule"/>
</dbReference>
<dbReference type="GO" id="GO:0004810">
    <property type="term" value="F:CCA tRNA nucleotidyltransferase activity"/>
    <property type="evidence" value="ECO:0007669"/>
    <property type="project" value="InterPro"/>
</dbReference>
<dbReference type="GO" id="GO:0000049">
    <property type="term" value="F:tRNA binding"/>
    <property type="evidence" value="ECO:0007669"/>
    <property type="project" value="UniProtKB-UniRule"/>
</dbReference>
<dbReference type="GO" id="GO:0140741">
    <property type="term" value="F:tRNA-uracil-4 sulfurtransferase activity"/>
    <property type="evidence" value="ECO:0007669"/>
    <property type="project" value="UniProtKB-EC"/>
</dbReference>
<dbReference type="GO" id="GO:0009228">
    <property type="term" value="P:thiamine biosynthetic process"/>
    <property type="evidence" value="ECO:0007669"/>
    <property type="project" value="UniProtKB-KW"/>
</dbReference>
<dbReference type="GO" id="GO:0009229">
    <property type="term" value="P:thiamine diphosphate biosynthetic process"/>
    <property type="evidence" value="ECO:0007669"/>
    <property type="project" value="UniProtKB-UniRule"/>
</dbReference>
<dbReference type="GO" id="GO:0052837">
    <property type="term" value="P:thiazole biosynthetic process"/>
    <property type="evidence" value="ECO:0007669"/>
    <property type="project" value="TreeGrafter"/>
</dbReference>
<dbReference type="GO" id="GO:0002937">
    <property type="term" value="P:tRNA 4-thiouridine biosynthesis"/>
    <property type="evidence" value="ECO:0007669"/>
    <property type="project" value="TreeGrafter"/>
</dbReference>
<dbReference type="CDD" id="cd01712">
    <property type="entry name" value="PPase_ThiI"/>
    <property type="match status" value="1"/>
</dbReference>
<dbReference type="CDD" id="cd11716">
    <property type="entry name" value="THUMP_ThiI"/>
    <property type="match status" value="1"/>
</dbReference>
<dbReference type="FunFam" id="3.40.50.620:FF:000053">
    <property type="entry name" value="Probable tRNA sulfurtransferase"/>
    <property type="match status" value="1"/>
</dbReference>
<dbReference type="Gene3D" id="3.30.2130.30">
    <property type="match status" value="1"/>
</dbReference>
<dbReference type="Gene3D" id="3.40.50.620">
    <property type="entry name" value="HUPs"/>
    <property type="match status" value="1"/>
</dbReference>
<dbReference type="HAMAP" id="MF_00021">
    <property type="entry name" value="ThiI"/>
    <property type="match status" value="1"/>
</dbReference>
<dbReference type="InterPro" id="IPR014729">
    <property type="entry name" value="Rossmann-like_a/b/a_fold"/>
</dbReference>
<dbReference type="InterPro" id="IPR020536">
    <property type="entry name" value="ThiI_AANH"/>
</dbReference>
<dbReference type="InterPro" id="IPR054173">
    <property type="entry name" value="ThiI_fer"/>
</dbReference>
<dbReference type="InterPro" id="IPR049961">
    <property type="entry name" value="ThiI_N"/>
</dbReference>
<dbReference type="InterPro" id="IPR004114">
    <property type="entry name" value="THUMP_dom"/>
</dbReference>
<dbReference type="InterPro" id="IPR049962">
    <property type="entry name" value="THUMP_ThiI"/>
</dbReference>
<dbReference type="InterPro" id="IPR003720">
    <property type="entry name" value="tRNA_STrfase"/>
</dbReference>
<dbReference type="InterPro" id="IPR050102">
    <property type="entry name" value="tRNA_sulfurtransferase_ThiI"/>
</dbReference>
<dbReference type="NCBIfam" id="TIGR00342">
    <property type="entry name" value="tRNA uracil 4-sulfurtransferase ThiI"/>
    <property type="match status" value="1"/>
</dbReference>
<dbReference type="PANTHER" id="PTHR43209">
    <property type="entry name" value="TRNA SULFURTRANSFERASE"/>
    <property type="match status" value="1"/>
</dbReference>
<dbReference type="PANTHER" id="PTHR43209:SF1">
    <property type="entry name" value="TRNA SULFURTRANSFERASE"/>
    <property type="match status" value="1"/>
</dbReference>
<dbReference type="Pfam" id="PF02568">
    <property type="entry name" value="ThiI"/>
    <property type="match status" value="1"/>
</dbReference>
<dbReference type="Pfam" id="PF22025">
    <property type="entry name" value="ThiI_fer"/>
    <property type="match status" value="1"/>
</dbReference>
<dbReference type="Pfam" id="PF02926">
    <property type="entry name" value="THUMP"/>
    <property type="match status" value="1"/>
</dbReference>
<dbReference type="SMART" id="SM00981">
    <property type="entry name" value="THUMP"/>
    <property type="match status" value="1"/>
</dbReference>
<dbReference type="SUPFAM" id="SSF52402">
    <property type="entry name" value="Adenine nucleotide alpha hydrolases-like"/>
    <property type="match status" value="1"/>
</dbReference>
<dbReference type="SUPFAM" id="SSF143437">
    <property type="entry name" value="THUMP domain-like"/>
    <property type="match status" value="1"/>
</dbReference>
<dbReference type="PROSITE" id="PS51165">
    <property type="entry name" value="THUMP"/>
    <property type="match status" value="1"/>
</dbReference>
<protein>
    <recommendedName>
        <fullName evidence="1">Probable tRNA sulfurtransferase</fullName>
        <ecNumber evidence="1">2.8.1.4</ecNumber>
    </recommendedName>
    <alternativeName>
        <fullName evidence="1">Sulfur carrier protein ThiS sulfurtransferase</fullName>
    </alternativeName>
    <alternativeName>
        <fullName evidence="1">Thiamine biosynthesis protein ThiI</fullName>
    </alternativeName>
    <alternativeName>
        <fullName evidence="1">tRNA 4-thiouridine synthase</fullName>
    </alternativeName>
</protein>
<feature type="chain" id="PRO_1000090024" description="Probable tRNA sulfurtransferase">
    <location>
        <begin position="1"/>
        <end position="378"/>
    </location>
</feature>
<feature type="domain" description="THUMP" evidence="1">
    <location>
        <begin position="51"/>
        <end position="153"/>
    </location>
</feature>
<feature type="binding site" evidence="1">
    <location>
        <begin position="171"/>
        <end position="172"/>
    </location>
    <ligand>
        <name>ATP</name>
        <dbReference type="ChEBI" id="CHEBI:30616"/>
    </ligand>
</feature>
<feature type="binding site" evidence="1">
    <location>
        <begin position="196"/>
        <end position="197"/>
    </location>
    <ligand>
        <name>ATP</name>
        <dbReference type="ChEBI" id="CHEBI:30616"/>
    </ligand>
</feature>
<feature type="binding site" evidence="1">
    <location>
        <position position="253"/>
    </location>
    <ligand>
        <name>ATP</name>
        <dbReference type="ChEBI" id="CHEBI:30616"/>
    </ligand>
</feature>
<feature type="binding site" evidence="1">
    <location>
        <position position="275"/>
    </location>
    <ligand>
        <name>ATP</name>
        <dbReference type="ChEBI" id="CHEBI:30616"/>
    </ligand>
</feature>
<feature type="binding site" evidence="1">
    <location>
        <position position="284"/>
    </location>
    <ligand>
        <name>ATP</name>
        <dbReference type="ChEBI" id="CHEBI:30616"/>
    </ligand>
</feature>